<feature type="chain" id="PRO_1000072029" description="Cysteine desulfurase IscS">
    <location>
        <begin position="1"/>
        <end position="404"/>
    </location>
</feature>
<feature type="active site" description="Cysteine persulfide intermediate" evidence="1">
    <location>
        <position position="328"/>
    </location>
</feature>
<feature type="binding site" evidence="1">
    <location>
        <begin position="75"/>
        <end position="76"/>
    </location>
    <ligand>
        <name>pyridoxal 5'-phosphate</name>
        <dbReference type="ChEBI" id="CHEBI:597326"/>
    </ligand>
</feature>
<feature type="binding site" evidence="1">
    <location>
        <position position="155"/>
    </location>
    <ligand>
        <name>pyridoxal 5'-phosphate</name>
        <dbReference type="ChEBI" id="CHEBI:597326"/>
    </ligand>
</feature>
<feature type="binding site" evidence="1">
    <location>
        <position position="183"/>
    </location>
    <ligand>
        <name>pyridoxal 5'-phosphate</name>
        <dbReference type="ChEBI" id="CHEBI:597326"/>
    </ligand>
</feature>
<feature type="binding site" evidence="1">
    <location>
        <begin position="203"/>
        <end position="205"/>
    </location>
    <ligand>
        <name>pyridoxal 5'-phosphate</name>
        <dbReference type="ChEBI" id="CHEBI:597326"/>
    </ligand>
</feature>
<feature type="binding site" evidence="1">
    <location>
        <position position="243"/>
    </location>
    <ligand>
        <name>pyridoxal 5'-phosphate</name>
        <dbReference type="ChEBI" id="CHEBI:597326"/>
    </ligand>
</feature>
<feature type="binding site" description="via persulfide group" evidence="1">
    <location>
        <position position="328"/>
    </location>
    <ligand>
        <name>[2Fe-2S] cluster</name>
        <dbReference type="ChEBI" id="CHEBI:190135"/>
        <note>ligand shared with IscU</note>
    </ligand>
</feature>
<feature type="modified residue" description="N6-(pyridoxal phosphate)lysine" evidence="1">
    <location>
        <position position="206"/>
    </location>
</feature>
<keyword id="KW-0001">2Fe-2S</keyword>
<keyword id="KW-0963">Cytoplasm</keyword>
<keyword id="KW-0408">Iron</keyword>
<keyword id="KW-0411">Iron-sulfur</keyword>
<keyword id="KW-0479">Metal-binding</keyword>
<keyword id="KW-0663">Pyridoxal phosphate</keyword>
<keyword id="KW-1185">Reference proteome</keyword>
<keyword id="KW-0808">Transferase</keyword>
<accession>A6VMN7</accession>
<dbReference type="EC" id="2.8.1.7" evidence="1"/>
<dbReference type="EMBL" id="CP000746">
    <property type="protein sequence ID" value="ABR74234.1"/>
    <property type="molecule type" value="Genomic_DNA"/>
</dbReference>
<dbReference type="RefSeq" id="WP_012072612.1">
    <property type="nucleotide sequence ID" value="NC_009655.1"/>
</dbReference>
<dbReference type="SMR" id="A6VMN7"/>
<dbReference type="STRING" id="339671.Asuc_0864"/>
<dbReference type="KEGG" id="asu:Asuc_0864"/>
<dbReference type="eggNOG" id="COG1104">
    <property type="taxonomic scope" value="Bacteria"/>
</dbReference>
<dbReference type="HOGENOM" id="CLU_003433_0_2_6"/>
<dbReference type="OrthoDB" id="9808002at2"/>
<dbReference type="UniPathway" id="UPA00266"/>
<dbReference type="Proteomes" id="UP000001114">
    <property type="component" value="Chromosome"/>
</dbReference>
<dbReference type="GO" id="GO:1990221">
    <property type="term" value="C:L-cysteine desulfurase complex"/>
    <property type="evidence" value="ECO:0007669"/>
    <property type="project" value="UniProtKB-ARBA"/>
</dbReference>
<dbReference type="GO" id="GO:0051537">
    <property type="term" value="F:2 iron, 2 sulfur cluster binding"/>
    <property type="evidence" value="ECO:0007669"/>
    <property type="project" value="UniProtKB-UniRule"/>
</dbReference>
<dbReference type="GO" id="GO:0031071">
    <property type="term" value="F:cysteine desulfurase activity"/>
    <property type="evidence" value="ECO:0007669"/>
    <property type="project" value="UniProtKB-UniRule"/>
</dbReference>
<dbReference type="GO" id="GO:0046872">
    <property type="term" value="F:metal ion binding"/>
    <property type="evidence" value="ECO:0007669"/>
    <property type="project" value="UniProtKB-KW"/>
</dbReference>
<dbReference type="GO" id="GO:0030170">
    <property type="term" value="F:pyridoxal phosphate binding"/>
    <property type="evidence" value="ECO:0007669"/>
    <property type="project" value="UniProtKB-UniRule"/>
</dbReference>
<dbReference type="GO" id="GO:0044571">
    <property type="term" value="P:[2Fe-2S] cluster assembly"/>
    <property type="evidence" value="ECO:0007669"/>
    <property type="project" value="UniProtKB-UniRule"/>
</dbReference>
<dbReference type="FunFam" id="3.40.640.10:FF:000003">
    <property type="entry name" value="Cysteine desulfurase IscS"/>
    <property type="match status" value="1"/>
</dbReference>
<dbReference type="FunFam" id="3.90.1150.10:FF:000002">
    <property type="entry name" value="Cysteine desulfurase IscS"/>
    <property type="match status" value="1"/>
</dbReference>
<dbReference type="Gene3D" id="3.90.1150.10">
    <property type="entry name" value="Aspartate Aminotransferase, domain 1"/>
    <property type="match status" value="1"/>
</dbReference>
<dbReference type="Gene3D" id="3.40.640.10">
    <property type="entry name" value="Type I PLP-dependent aspartate aminotransferase-like (Major domain)"/>
    <property type="match status" value="1"/>
</dbReference>
<dbReference type="HAMAP" id="MF_00331">
    <property type="entry name" value="Cys_desulf_IscS"/>
    <property type="match status" value="1"/>
</dbReference>
<dbReference type="InterPro" id="IPR000192">
    <property type="entry name" value="Aminotrans_V_dom"/>
</dbReference>
<dbReference type="InterPro" id="IPR020578">
    <property type="entry name" value="Aminotrans_V_PyrdxlP_BS"/>
</dbReference>
<dbReference type="InterPro" id="IPR010240">
    <property type="entry name" value="Cys_deSase_IscS"/>
</dbReference>
<dbReference type="InterPro" id="IPR016454">
    <property type="entry name" value="Cysteine_dSase"/>
</dbReference>
<dbReference type="InterPro" id="IPR015424">
    <property type="entry name" value="PyrdxlP-dep_Trfase"/>
</dbReference>
<dbReference type="InterPro" id="IPR015421">
    <property type="entry name" value="PyrdxlP-dep_Trfase_major"/>
</dbReference>
<dbReference type="InterPro" id="IPR015422">
    <property type="entry name" value="PyrdxlP-dep_Trfase_small"/>
</dbReference>
<dbReference type="NCBIfam" id="TIGR02006">
    <property type="entry name" value="IscS"/>
    <property type="match status" value="1"/>
</dbReference>
<dbReference type="NCBIfam" id="NF002806">
    <property type="entry name" value="PRK02948.1"/>
    <property type="match status" value="1"/>
</dbReference>
<dbReference type="NCBIfam" id="NF010611">
    <property type="entry name" value="PRK14012.1"/>
    <property type="match status" value="1"/>
</dbReference>
<dbReference type="PANTHER" id="PTHR11601:SF34">
    <property type="entry name" value="CYSTEINE DESULFURASE"/>
    <property type="match status" value="1"/>
</dbReference>
<dbReference type="PANTHER" id="PTHR11601">
    <property type="entry name" value="CYSTEINE DESULFURYLASE FAMILY MEMBER"/>
    <property type="match status" value="1"/>
</dbReference>
<dbReference type="Pfam" id="PF00266">
    <property type="entry name" value="Aminotran_5"/>
    <property type="match status" value="1"/>
</dbReference>
<dbReference type="PIRSF" id="PIRSF005572">
    <property type="entry name" value="NifS"/>
    <property type="match status" value="1"/>
</dbReference>
<dbReference type="SUPFAM" id="SSF53383">
    <property type="entry name" value="PLP-dependent transferases"/>
    <property type="match status" value="1"/>
</dbReference>
<dbReference type="PROSITE" id="PS00595">
    <property type="entry name" value="AA_TRANSFER_CLASS_5"/>
    <property type="match status" value="1"/>
</dbReference>
<proteinExistence type="inferred from homology"/>
<name>ISCS_ACTSZ</name>
<evidence type="ECO:0000255" key="1">
    <source>
        <dbReference type="HAMAP-Rule" id="MF_00331"/>
    </source>
</evidence>
<sequence length="404" mass="44995">MKLPIYLDYAATCPVDERVAEKMMNYLTIDGVFGNPASRSHKFGWQAEEAVDIARNQIADLIGADSREIVFTSGATESDNLAIKGAAHFYQTKGKHIITCKTEHKAVLDTCRQLEREGFEVTYLSPKCDGLIDLDEFKAAIRPDTILASIMHVNNEIGVIQDIRAIGEICRAHKIIFHVDATQSVGKIAINLAELSVDLLSMSGHKLYGPKGVGALYVRRKPRIRLEAIIHGGGHERGMRSGTLPVHQIVGMGEAYRICKEEMATEMPRLKALRDRLYNGLKDIEETYVNGSMEHRVDSNLNISFNYVEGESLMMALRDIAVSSGSACTSASLEPSYVLRALGLNDELAHSSIRFTVGRYTTEEEIDYTIELVKSAVKKLRELSPLWDMFKEGVDMSKIEWSAH</sequence>
<protein>
    <recommendedName>
        <fullName evidence="1">Cysteine desulfurase IscS</fullName>
        <ecNumber evidence="1">2.8.1.7</ecNumber>
    </recommendedName>
</protein>
<organism>
    <name type="scientific">Actinobacillus succinogenes (strain ATCC 55618 / DSM 22257 / CCUG 43843 / 130Z)</name>
    <dbReference type="NCBI Taxonomy" id="339671"/>
    <lineage>
        <taxon>Bacteria</taxon>
        <taxon>Pseudomonadati</taxon>
        <taxon>Pseudomonadota</taxon>
        <taxon>Gammaproteobacteria</taxon>
        <taxon>Pasteurellales</taxon>
        <taxon>Pasteurellaceae</taxon>
        <taxon>Actinobacillus</taxon>
    </lineage>
</organism>
<reference key="1">
    <citation type="journal article" date="2010" name="BMC Genomics">
        <title>A genomic perspective on the potential of Actinobacillus succinogenes for industrial succinate production.</title>
        <authorList>
            <person name="McKinlay J.B."/>
            <person name="Laivenieks M."/>
            <person name="Schindler B.D."/>
            <person name="McKinlay A.A."/>
            <person name="Siddaramappa S."/>
            <person name="Challacombe J.F."/>
            <person name="Lowry S.R."/>
            <person name="Clum A."/>
            <person name="Lapidus A.L."/>
            <person name="Burkhart K.B."/>
            <person name="Harkins V."/>
            <person name="Vieille C."/>
        </authorList>
    </citation>
    <scope>NUCLEOTIDE SEQUENCE [LARGE SCALE GENOMIC DNA]</scope>
    <source>
        <strain>ATCC 55618 / DSM 22257 / CCUG 43843 / 130Z</strain>
    </source>
</reference>
<gene>
    <name evidence="1" type="primary">iscS</name>
    <name type="ordered locus">Asuc_0864</name>
</gene>
<comment type="function">
    <text evidence="1">Master enzyme that delivers sulfur to a number of partners involved in Fe-S cluster assembly, tRNA modification or cofactor biosynthesis. Catalyzes the removal of elemental sulfur atoms from cysteine to produce alanine. Functions as a sulfur delivery protein for Fe-S cluster synthesis onto IscU, an Fe-S scaffold assembly protein, as well as other S acceptor proteins.</text>
</comment>
<comment type="catalytic activity">
    <reaction evidence="1">
        <text>(sulfur carrier)-H + L-cysteine = (sulfur carrier)-SH + L-alanine</text>
        <dbReference type="Rhea" id="RHEA:43892"/>
        <dbReference type="Rhea" id="RHEA-COMP:14737"/>
        <dbReference type="Rhea" id="RHEA-COMP:14739"/>
        <dbReference type="ChEBI" id="CHEBI:29917"/>
        <dbReference type="ChEBI" id="CHEBI:35235"/>
        <dbReference type="ChEBI" id="CHEBI:57972"/>
        <dbReference type="ChEBI" id="CHEBI:64428"/>
        <dbReference type="EC" id="2.8.1.7"/>
    </reaction>
</comment>
<comment type="cofactor">
    <cofactor evidence="1">
        <name>pyridoxal 5'-phosphate</name>
        <dbReference type="ChEBI" id="CHEBI:597326"/>
    </cofactor>
</comment>
<comment type="pathway">
    <text evidence="1">Cofactor biosynthesis; iron-sulfur cluster biosynthesis.</text>
</comment>
<comment type="subunit">
    <text evidence="1">Homodimer. Forms a heterotetramer with IscU, interacts with other sulfur acceptors.</text>
</comment>
<comment type="subcellular location">
    <subcellularLocation>
        <location evidence="1">Cytoplasm</location>
    </subcellularLocation>
</comment>
<comment type="similarity">
    <text evidence="1">Belongs to the class-V pyridoxal-phosphate-dependent aminotransferase family. NifS/IscS subfamily.</text>
</comment>